<protein>
    <recommendedName>
        <fullName evidence="1">Glutamyl-tRNA reductase</fullName>
        <shortName evidence="1">GluTR</shortName>
        <ecNumber evidence="1">1.2.1.70</ecNumber>
    </recommendedName>
</protein>
<name>HEM1_BACC7</name>
<reference key="1">
    <citation type="submission" date="2008-10" db="EMBL/GenBank/DDBJ databases">
        <title>Genome sequence of Bacillus cereus AH187.</title>
        <authorList>
            <person name="Dodson R.J."/>
            <person name="Durkin A.S."/>
            <person name="Rosovitz M.J."/>
            <person name="Rasko D.A."/>
            <person name="Kolsto A.B."/>
            <person name="Okstad O.A."/>
            <person name="Ravel J."/>
            <person name="Sutton G."/>
        </authorList>
    </citation>
    <scope>NUCLEOTIDE SEQUENCE [LARGE SCALE GENOMIC DNA]</scope>
    <source>
        <strain>AH187</strain>
    </source>
</reference>
<proteinExistence type="inferred from homology"/>
<dbReference type="EC" id="1.2.1.70" evidence="1"/>
<dbReference type="EMBL" id="CP001177">
    <property type="protein sequence ID" value="ACJ81830.1"/>
    <property type="molecule type" value="Genomic_DNA"/>
</dbReference>
<dbReference type="SMR" id="B7HQM6"/>
<dbReference type="KEGG" id="bcr:BCAH187_A4602"/>
<dbReference type="HOGENOM" id="CLU_035113_2_2_9"/>
<dbReference type="UniPathway" id="UPA00251">
    <property type="reaction ID" value="UER00316"/>
</dbReference>
<dbReference type="Proteomes" id="UP000002214">
    <property type="component" value="Chromosome"/>
</dbReference>
<dbReference type="GO" id="GO:0008883">
    <property type="term" value="F:glutamyl-tRNA reductase activity"/>
    <property type="evidence" value="ECO:0007669"/>
    <property type="project" value="UniProtKB-UniRule"/>
</dbReference>
<dbReference type="GO" id="GO:0050661">
    <property type="term" value="F:NADP binding"/>
    <property type="evidence" value="ECO:0007669"/>
    <property type="project" value="InterPro"/>
</dbReference>
<dbReference type="GO" id="GO:0006782">
    <property type="term" value="P:protoporphyrinogen IX biosynthetic process"/>
    <property type="evidence" value="ECO:0007669"/>
    <property type="project" value="UniProtKB-UniRule"/>
</dbReference>
<dbReference type="CDD" id="cd05213">
    <property type="entry name" value="NAD_bind_Glutamyl_tRNA_reduct"/>
    <property type="match status" value="1"/>
</dbReference>
<dbReference type="FunFam" id="3.30.460.30:FF:000001">
    <property type="entry name" value="Glutamyl-tRNA reductase"/>
    <property type="match status" value="1"/>
</dbReference>
<dbReference type="FunFam" id="3.40.50.720:FF:000031">
    <property type="entry name" value="Glutamyl-tRNA reductase"/>
    <property type="match status" value="1"/>
</dbReference>
<dbReference type="Gene3D" id="3.30.460.30">
    <property type="entry name" value="Glutamyl-tRNA reductase, N-terminal domain"/>
    <property type="match status" value="1"/>
</dbReference>
<dbReference type="Gene3D" id="3.40.50.720">
    <property type="entry name" value="NAD(P)-binding Rossmann-like Domain"/>
    <property type="match status" value="1"/>
</dbReference>
<dbReference type="HAMAP" id="MF_00087">
    <property type="entry name" value="Glu_tRNA_reductase"/>
    <property type="match status" value="1"/>
</dbReference>
<dbReference type="InterPro" id="IPR000343">
    <property type="entry name" value="4pyrrol_synth_GluRdtase"/>
</dbReference>
<dbReference type="InterPro" id="IPR015896">
    <property type="entry name" value="4pyrrol_synth_GluRdtase_dimer"/>
</dbReference>
<dbReference type="InterPro" id="IPR015895">
    <property type="entry name" value="4pyrrol_synth_GluRdtase_N"/>
</dbReference>
<dbReference type="InterPro" id="IPR018214">
    <property type="entry name" value="GluRdtase_CS"/>
</dbReference>
<dbReference type="InterPro" id="IPR036453">
    <property type="entry name" value="GluRdtase_dimer_dom_sf"/>
</dbReference>
<dbReference type="InterPro" id="IPR036343">
    <property type="entry name" value="GluRdtase_N_sf"/>
</dbReference>
<dbReference type="InterPro" id="IPR036291">
    <property type="entry name" value="NAD(P)-bd_dom_sf"/>
</dbReference>
<dbReference type="InterPro" id="IPR006151">
    <property type="entry name" value="Shikm_DH/Glu-tRNA_Rdtase"/>
</dbReference>
<dbReference type="NCBIfam" id="TIGR01035">
    <property type="entry name" value="hemA"/>
    <property type="match status" value="1"/>
</dbReference>
<dbReference type="PANTHER" id="PTHR43120">
    <property type="entry name" value="GLUTAMYL-TRNA REDUCTASE 1, CHLOROPLASTIC"/>
    <property type="match status" value="1"/>
</dbReference>
<dbReference type="PANTHER" id="PTHR43120:SF1">
    <property type="entry name" value="GLUTAMYL-TRNA REDUCTASE 1, CHLOROPLASTIC"/>
    <property type="match status" value="1"/>
</dbReference>
<dbReference type="Pfam" id="PF00745">
    <property type="entry name" value="GlutR_dimer"/>
    <property type="match status" value="1"/>
</dbReference>
<dbReference type="Pfam" id="PF05201">
    <property type="entry name" value="GlutR_N"/>
    <property type="match status" value="1"/>
</dbReference>
<dbReference type="Pfam" id="PF01488">
    <property type="entry name" value="Shikimate_DH"/>
    <property type="match status" value="1"/>
</dbReference>
<dbReference type="PIRSF" id="PIRSF000445">
    <property type="entry name" value="4pyrrol_synth_GluRdtase"/>
    <property type="match status" value="1"/>
</dbReference>
<dbReference type="SUPFAM" id="SSF69742">
    <property type="entry name" value="Glutamyl tRNA-reductase catalytic, N-terminal domain"/>
    <property type="match status" value="1"/>
</dbReference>
<dbReference type="SUPFAM" id="SSF69075">
    <property type="entry name" value="Glutamyl tRNA-reductase dimerization domain"/>
    <property type="match status" value="1"/>
</dbReference>
<dbReference type="SUPFAM" id="SSF51735">
    <property type="entry name" value="NAD(P)-binding Rossmann-fold domains"/>
    <property type="match status" value="1"/>
</dbReference>
<dbReference type="PROSITE" id="PS00747">
    <property type="entry name" value="GLUTR"/>
    <property type="match status" value="1"/>
</dbReference>
<accession>B7HQM6</accession>
<keyword id="KW-0521">NADP</keyword>
<keyword id="KW-0560">Oxidoreductase</keyword>
<keyword id="KW-0627">Porphyrin biosynthesis</keyword>
<evidence type="ECO:0000255" key="1">
    <source>
        <dbReference type="HAMAP-Rule" id="MF_00087"/>
    </source>
</evidence>
<sequence length="444" mass="49727">MHILVVSVNYRTAPVEFREKLTFQAAELEQAMTTLQNQKSVLENVIVSTCNRTEVYAVVDQLHTGRYYIKKFLADWFQLEIEEVAPYLTIFEQDGAIDHLFRVTCGLDSMVVGETQILGQIKDSFLEAQQVKATGTIFNELFKQVITLAKRAHSETTIGESAMSVSYAAVELGKKIFGELTDCHVLILGAGKMGELALQNLYGSGARKVTVMNRTLSKAEIMAEKYMGHAKPLSELQCALLEADILISSTGASDYVITKEMMTKVEKMRSGRPLFMVDIAVPRDIDPAIDELEGSFLYDIDDLQGVVEANRAERLKEAEKIQFMIEEEIVVFKTWLSTLGVVPLISALRDKALAIQSETMESLERKIPTLSDRERKVISKHTKSIINQLLKDPILVAKEIAAEEGADEKLALFAKIFDLEMEDVESRAEEVEHKRAWTPSVPSL</sequence>
<organism>
    <name type="scientific">Bacillus cereus (strain AH187)</name>
    <dbReference type="NCBI Taxonomy" id="405534"/>
    <lineage>
        <taxon>Bacteria</taxon>
        <taxon>Bacillati</taxon>
        <taxon>Bacillota</taxon>
        <taxon>Bacilli</taxon>
        <taxon>Bacillales</taxon>
        <taxon>Bacillaceae</taxon>
        <taxon>Bacillus</taxon>
        <taxon>Bacillus cereus group</taxon>
    </lineage>
</organism>
<feature type="chain" id="PRO_1000190504" description="Glutamyl-tRNA reductase">
    <location>
        <begin position="1"/>
        <end position="444"/>
    </location>
</feature>
<feature type="active site" description="Nucleophile" evidence="1">
    <location>
        <position position="50"/>
    </location>
</feature>
<feature type="binding site" evidence="1">
    <location>
        <begin position="49"/>
        <end position="52"/>
    </location>
    <ligand>
        <name>substrate</name>
    </ligand>
</feature>
<feature type="binding site" evidence="1">
    <location>
        <position position="109"/>
    </location>
    <ligand>
        <name>substrate</name>
    </ligand>
</feature>
<feature type="binding site" evidence="1">
    <location>
        <begin position="114"/>
        <end position="116"/>
    </location>
    <ligand>
        <name>substrate</name>
    </ligand>
</feature>
<feature type="binding site" evidence="1">
    <location>
        <position position="120"/>
    </location>
    <ligand>
        <name>substrate</name>
    </ligand>
</feature>
<feature type="binding site" evidence="1">
    <location>
        <begin position="189"/>
        <end position="194"/>
    </location>
    <ligand>
        <name>NADP(+)</name>
        <dbReference type="ChEBI" id="CHEBI:58349"/>
    </ligand>
</feature>
<feature type="site" description="Important for activity" evidence="1">
    <location>
        <position position="99"/>
    </location>
</feature>
<comment type="function">
    <text evidence="1">Catalyzes the NADPH-dependent reduction of glutamyl-tRNA(Glu) to glutamate 1-semialdehyde (GSA).</text>
</comment>
<comment type="catalytic activity">
    <reaction evidence="1">
        <text>(S)-4-amino-5-oxopentanoate + tRNA(Glu) + NADP(+) = L-glutamyl-tRNA(Glu) + NADPH + H(+)</text>
        <dbReference type="Rhea" id="RHEA:12344"/>
        <dbReference type="Rhea" id="RHEA-COMP:9663"/>
        <dbReference type="Rhea" id="RHEA-COMP:9680"/>
        <dbReference type="ChEBI" id="CHEBI:15378"/>
        <dbReference type="ChEBI" id="CHEBI:57501"/>
        <dbReference type="ChEBI" id="CHEBI:57783"/>
        <dbReference type="ChEBI" id="CHEBI:58349"/>
        <dbReference type="ChEBI" id="CHEBI:78442"/>
        <dbReference type="ChEBI" id="CHEBI:78520"/>
        <dbReference type="EC" id="1.2.1.70"/>
    </reaction>
</comment>
<comment type="pathway">
    <text evidence="1">Porphyrin-containing compound metabolism; protoporphyrin-IX biosynthesis; 5-aminolevulinate from L-glutamyl-tRNA(Glu): step 1/2.</text>
</comment>
<comment type="subunit">
    <text evidence="1">Homodimer.</text>
</comment>
<comment type="domain">
    <text evidence="1">Possesses an unusual extended V-shaped dimeric structure with each monomer consisting of three distinct domains arranged along a curved 'spinal' alpha-helix. The N-terminal catalytic domain specifically recognizes the glutamate moiety of the substrate. The second domain is the NADPH-binding domain, and the third C-terminal domain is responsible for dimerization.</text>
</comment>
<comment type="miscellaneous">
    <text evidence="1">During catalysis, the active site Cys acts as a nucleophile attacking the alpha-carbonyl group of tRNA-bound glutamate with the formation of a thioester intermediate between enzyme and glutamate, and the concomitant release of tRNA(Glu). The thioester intermediate is finally reduced by direct hydride transfer from NADPH, to form the product GSA.</text>
</comment>
<comment type="similarity">
    <text evidence="1">Belongs to the glutamyl-tRNA reductase family.</text>
</comment>
<gene>
    <name evidence="1" type="primary">hemA</name>
    <name type="ordered locus">BCAH187_A4602</name>
</gene>